<name>CH10_CUTAK</name>
<dbReference type="EMBL" id="AE017283">
    <property type="protein sequence ID" value="AAT83502.1"/>
    <property type="molecule type" value="Genomic_DNA"/>
</dbReference>
<dbReference type="RefSeq" id="WP_002514778.1">
    <property type="nucleotide sequence ID" value="NZ_CP025935.1"/>
</dbReference>
<dbReference type="SMR" id="Q6A6W1"/>
<dbReference type="EnsemblBacteria" id="AAT83502">
    <property type="protein sequence ID" value="AAT83502"/>
    <property type="gene ID" value="PPA1773"/>
</dbReference>
<dbReference type="GeneID" id="92857728"/>
<dbReference type="KEGG" id="pac:PPA1773"/>
<dbReference type="eggNOG" id="COG0234">
    <property type="taxonomic scope" value="Bacteria"/>
</dbReference>
<dbReference type="HOGENOM" id="CLU_132825_2_0_11"/>
<dbReference type="Proteomes" id="UP000000603">
    <property type="component" value="Chromosome"/>
</dbReference>
<dbReference type="GO" id="GO:0005737">
    <property type="term" value="C:cytoplasm"/>
    <property type="evidence" value="ECO:0007669"/>
    <property type="project" value="UniProtKB-SubCell"/>
</dbReference>
<dbReference type="GO" id="GO:0005524">
    <property type="term" value="F:ATP binding"/>
    <property type="evidence" value="ECO:0007669"/>
    <property type="project" value="InterPro"/>
</dbReference>
<dbReference type="GO" id="GO:0046872">
    <property type="term" value="F:metal ion binding"/>
    <property type="evidence" value="ECO:0007669"/>
    <property type="project" value="TreeGrafter"/>
</dbReference>
<dbReference type="GO" id="GO:0044183">
    <property type="term" value="F:protein folding chaperone"/>
    <property type="evidence" value="ECO:0007669"/>
    <property type="project" value="InterPro"/>
</dbReference>
<dbReference type="GO" id="GO:0051087">
    <property type="term" value="F:protein-folding chaperone binding"/>
    <property type="evidence" value="ECO:0007669"/>
    <property type="project" value="TreeGrafter"/>
</dbReference>
<dbReference type="GO" id="GO:0051082">
    <property type="term" value="F:unfolded protein binding"/>
    <property type="evidence" value="ECO:0007669"/>
    <property type="project" value="TreeGrafter"/>
</dbReference>
<dbReference type="GO" id="GO:0051085">
    <property type="term" value="P:chaperone cofactor-dependent protein refolding"/>
    <property type="evidence" value="ECO:0007669"/>
    <property type="project" value="TreeGrafter"/>
</dbReference>
<dbReference type="CDD" id="cd00320">
    <property type="entry name" value="cpn10"/>
    <property type="match status" value="1"/>
</dbReference>
<dbReference type="FunFam" id="2.30.33.40:FF:000001">
    <property type="entry name" value="10 kDa chaperonin"/>
    <property type="match status" value="1"/>
</dbReference>
<dbReference type="Gene3D" id="2.30.33.40">
    <property type="entry name" value="GroES chaperonin"/>
    <property type="match status" value="1"/>
</dbReference>
<dbReference type="HAMAP" id="MF_00580">
    <property type="entry name" value="CH10"/>
    <property type="match status" value="1"/>
</dbReference>
<dbReference type="InterPro" id="IPR020818">
    <property type="entry name" value="Chaperonin_GroES"/>
</dbReference>
<dbReference type="InterPro" id="IPR037124">
    <property type="entry name" value="Chaperonin_GroES_sf"/>
</dbReference>
<dbReference type="InterPro" id="IPR018369">
    <property type="entry name" value="Chaprnonin_Cpn10_CS"/>
</dbReference>
<dbReference type="InterPro" id="IPR011032">
    <property type="entry name" value="GroES-like_sf"/>
</dbReference>
<dbReference type="NCBIfam" id="NF001527">
    <property type="entry name" value="PRK00364.1-2"/>
    <property type="match status" value="1"/>
</dbReference>
<dbReference type="NCBIfam" id="NF001530">
    <property type="entry name" value="PRK00364.1-6"/>
    <property type="match status" value="1"/>
</dbReference>
<dbReference type="NCBIfam" id="NF001531">
    <property type="entry name" value="PRK00364.2-2"/>
    <property type="match status" value="1"/>
</dbReference>
<dbReference type="NCBIfam" id="NF001533">
    <property type="entry name" value="PRK00364.2-4"/>
    <property type="match status" value="1"/>
</dbReference>
<dbReference type="NCBIfam" id="NF001534">
    <property type="entry name" value="PRK00364.2-5"/>
    <property type="match status" value="1"/>
</dbReference>
<dbReference type="PANTHER" id="PTHR10772">
    <property type="entry name" value="10 KDA HEAT SHOCK PROTEIN"/>
    <property type="match status" value="1"/>
</dbReference>
<dbReference type="PANTHER" id="PTHR10772:SF58">
    <property type="entry name" value="CO-CHAPERONIN GROES"/>
    <property type="match status" value="1"/>
</dbReference>
<dbReference type="Pfam" id="PF00166">
    <property type="entry name" value="Cpn10"/>
    <property type="match status" value="1"/>
</dbReference>
<dbReference type="PRINTS" id="PR00297">
    <property type="entry name" value="CHAPERONIN10"/>
</dbReference>
<dbReference type="SMART" id="SM00883">
    <property type="entry name" value="Cpn10"/>
    <property type="match status" value="1"/>
</dbReference>
<dbReference type="SUPFAM" id="SSF50129">
    <property type="entry name" value="GroES-like"/>
    <property type="match status" value="1"/>
</dbReference>
<dbReference type="PROSITE" id="PS00681">
    <property type="entry name" value="CHAPERONINS_CPN10"/>
    <property type="match status" value="1"/>
</dbReference>
<comment type="function">
    <text evidence="1">Together with the chaperonin GroEL, plays an essential role in assisting protein folding. The GroEL-GroES system forms a nano-cage that allows encapsulation of the non-native substrate proteins and provides a physical environment optimized to promote and accelerate protein folding. GroES binds to the apical surface of the GroEL ring, thereby capping the opening of the GroEL channel.</text>
</comment>
<comment type="subunit">
    <text evidence="1">Heptamer of 7 subunits arranged in a ring. Interacts with the chaperonin GroEL.</text>
</comment>
<comment type="subcellular location">
    <subcellularLocation>
        <location evidence="1">Cytoplasm</location>
    </subcellularLocation>
</comment>
<comment type="similarity">
    <text evidence="1">Belongs to the GroES chaperonin family.</text>
</comment>
<feature type="chain" id="PRO_1000025324" description="Co-chaperonin GroES">
    <location>
        <begin position="1"/>
        <end position="98"/>
    </location>
</feature>
<feature type="region of interest" description="Disordered" evidence="2">
    <location>
        <begin position="35"/>
        <end position="57"/>
    </location>
</feature>
<organism>
    <name type="scientific">Cutibacterium acnes (strain DSM 16379 / KPA171202)</name>
    <name type="common">Propionibacterium acnes</name>
    <dbReference type="NCBI Taxonomy" id="267747"/>
    <lineage>
        <taxon>Bacteria</taxon>
        <taxon>Bacillati</taxon>
        <taxon>Actinomycetota</taxon>
        <taxon>Actinomycetes</taxon>
        <taxon>Propionibacteriales</taxon>
        <taxon>Propionibacteriaceae</taxon>
        <taxon>Cutibacterium</taxon>
    </lineage>
</organism>
<keyword id="KW-0143">Chaperone</keyword>
<keyword id="KW-0963">Cytoplasm</keyword>
<reference key="1">
    <citation type="journal article" date="2004" name="Science">
        <title>The complete genome sequence of Propionibacterium acnes, a commensal of human skin.</title>
        <authorList>
            <person name="Brueggemann H."/>
            <person name="Henne A."/>
            <person name="Hoster F."/>
            <person name="Liesegang H."/>
            <person name="Wiezer A."/>
            <person name="Strittmatter A."/>
            <person name="Hujer S."/>
            <person name="Duerre P."/>
            <person name="Gottschalk G."/>
        </authorList>
    </citation>
    <scope>NUCLEOTIDE SEQUENCE [LARGE SCALE GENOMIC DNA]</scope>
    <source>
        <strain>DSM 16379 / KPA171202</strain>
    </source>
</reference>
<sequence>MATTIKPLEDRVLVQPLEAEQTTASGLVIPDTAKEKPQEGKVISAGPGRVDDKGTRVPMDVKEGDVVIFSKYGGTEVKYDGQEYLLLNARDILAVVEK</sequence>
<protein>
    <recommendedName>
        <fullName evidence="1">Co-chaperonin GroES</fullName>
    </recommendedName>
    <alternativeName>
        <fullName evidence="1">10 kDa chaperonin</fullName>
    </alternativeName>
    <alternativeName>
        <fullName evidence="1">Chaperonin-10</fullName>
        <shortName evidence="1">Cpn10</shortName>
    </alternativeName>
</protein>
<accession>Q6A6W1</accession>
<evidence type="ECO:0000255" key="1">
    <source>
        <dbReference type="HAMAP-Rule" id="MF_00580"/>
    </source>
</evidence>
<evidence type="ECO:0000256" key="2">
    <source>
        <dbReference type="SAM" id="MobiDB-lite"/>
    </source>
</evidence>
<gene>
    <name evidence="1" type="primary">groES</name>
    <name evidence="1" type="synonym">groS</name>
    <name type="ordered locus">PPA1773</name>
</gene>
<proteinExistence type="inferred from homology"/>